<name>LRRD1_MACFA</name>
<gene>
    <name type="primary">LRRD1</name>
    <name type="ORF">QtsA-18164</name>
</gene>
<accession>Q4R6F0</accession>
<reference key="1">
    <citation type="submission" date="2005-06" db="EMBL/GenBank/DDBJ databases">
        <title>DNA sequences of macaque genes expressed in brain or testis and its evolutionary implications.</title>
        <authorList>
            <consortium name="International consortium for macaque cDNA sequencing and analysis"/>
        </authorList>
    </citation>
    <scope>NUCLEOTIDE SEQUENCE [LARGE SCALE MRNA]</scope>
    <source>
        <tissue>Testis</tissue>
    </source>
</reference>
<protein>
    <recommendedName>
        <fullName>Leucine-rich repeat and death domain-containing protein 1</fullName>
    </recommendedName>
</protein>
<keyword id="KW-0433">Leucine-rich repeat</keyword>
<keyword id="KW-1185">Reference proteome</keyword>
<keyword id="KW-0677">Repeat</keyword>
<dbReference type="EMBL" id="AB169234">
    <property type="protein sequence ID" value="BAE01325.1"/>
    <property type="molecule type" value="mRNA"/>
</dbReference>
<dbReference type="RefSeq" id="NP_001270297.1">
    <property type="nucleotide sequence ID" value="NM_001283368.1"/>
</dbReference>
<dbReference type="SMR" id="Q4R6F0"/>
<dbReference type="STRING" id="9541.ENSMFAP00000019147"/>
<dbReference type="eggNOG" id="KOG0619">
    <property type="taxonomic scope" value="Eukaryota"/>
</dbReference>
<dbReference type="Proteomes" id="UP000233100">
    <property type="component" value="Unplaced"/>
</dbReference>
<dbReference type="GO" id="GO:0005737">
    <property type="term" value="C:cytoplasm"/>
    <property type="evidence" value="ECO:0007669"/>
    <property type="project" value="TreeGrafter"/>
</dbReference>
<dbReference type="GO" id="GO:0007165">
    <property type="term" value="P:signal transduction"/>
    <property type="evidence" value="ECO:0007669"/>
    <property type="project" value="InterPro"/>
</dbReference>
<dbReference type="FunFam" id="1.10.533.10:FF:000083">
    <property type="entry name" value="Leucine rich repeats and death domain containing 1"/>
    <property type="match status" value="1"/>
</dbReference>
<dbReference type="FunFam" id="3.80.10.10:FF:000533">
    <property type="entry name" value="Leucine rich repeats and death domain containing 1"/>
    <property type="match status" value="1"/>
</dbReference>
<dbReference type="FunFam" id="3.80.10.10:FF:000689">
    <property type="entry name" value="Leucine rich repeats and death domain containing 1"/>
    <property type="match status" value="1"/>
</dbReference>
<dbReference type="FunFam" id="3.80.10.10:FF:000307">
    <property type="entry name" value="Leucine-rich repeats and death domain-containing 1"/>
    <property type="match status" value="1"/>
</dbReference>
<dbReference type="Gene3D" id="1.10.533.10">
    <property type="entry name" value="Death Domain, Fas"/>
    <property type="match status" value="1"/>
</dbReference>
<dbReference type="Gene3D" id="3.80.10.10">
    <property type="entry name" value="Ribonuclease Inhibitor"/>
    <property type="match status" value="3"/>
</dbReference>
<dbReference type="InterPro" id="IPR056869">
    <property type="entry name" value="DD_LRRD1"/>
</dbReference>
<dbReference type="InterPro" id="IPR011029">
    <property type="entry name" value="DEATH-like_dom_sf"/>
</dbReference>
<dbReference type="InterPro" id="IPR000488">
    <property type="entry name" value="Death_dom"/>
</dbReference>
<dbReference type="InterPro" id="IPR001611">
    <property type="entry name" value="Leu-rich_rpt"/>
</dbReference>
<dbReference type="InterPro" id="IPR003591">
    <property type="entry name" value="Leu-rich_rpt_typical-subtyp"/>
</dbReference>
<dbReference type="InterPro" id="IPR032675">
    <property type="entry name" value="LRR_dom_sf"/>
</dbReference>
<dbReference type="InterPro" id="IPR050216">
    <property type="entry name" value="LRR_domain-containing"/>
</dbReference>
<dbReference type="InterPro" id="IPR055414">
    <property type="entry name" value="LRR_R13L4/SHOC2-like"/>
</dbReference>
<dbReference type="PANTHER" id="PTHR48051">
    <property type="match status" value="1"/>
</dbReference>
<dbReference type="PANTHER" id="PTHR48051:SF49">
    <property type="entry name" value="LEUCINE-RICH REPEAT AND DEATH DOMAIN-CONTAINING PROTEIN 1"/>
    <property type="match status" value="1"/>
</dbReference>
<dbReference type="Pfam" id="PF24978">
    <property type="entry name" value="Death_Lrrd1"/>
    <property type="match status" value="1"/>
</dbReference>
<dbReference type="Pfam" id="PF00560">
    <property type="entry name" value="LRR_1"/>
    <property type="match status" value="1"/>
</dbReference>
<dbReference type="Pfam" id="PF23598">
    <property type="entry name" value="LRR_14"/>
    <property type="match status" value="2"/>
</dbReference>
<dbReference type="Pfam" id="PF13855">
    <property type="entry name" value="LRR_8"/>
    <property type="match status" value="2"/>
</dbReference>
<dbReference type="SMART" id="SM00364">
    <property type="entry name" value="LRR_BAC"/>
    <property type="match status" value="12"/>
</dbReference>
<dbReference type="SMART" id="SM00365">
    <property type="entry name" value="LRR_SD22"/>
    <property type="match status" value="10"/>
</dbReference>
<dbReference type="SMART" id="SM00369">
    <property type="entry name" value="LRR_TYP"/>
    <property type="match status" value="14"/>
</dbReference>
<dbReference type="SUPFAM" id="SSF52058">
    <property type="entry name" value="L domain-like"/>
    <property type="match status" value="2"/>
</dbReference>
<dbReference type="PROSITE" id="PS50017">
    <property type="entry name" value="DEATH_DOMAIN"/>
    <property type="match status" value="1"/>
</dbReference>
<dbReference type="PROSITE" id="PS51450">
    <property type="entry name" value="LRR"/>
    <property type="match status" value="22"/>
</dbReference>
<sequence>MSEKEGMSEELEDTISQFRKESRSQSVKEPGFIKETSNLINEASDYLEGKSSNQIYETHPRQITLESTSSSGSKSKRNEEQKKNLQFSETSTRTETSQSLSSLTGRIAEYQALVNFLSHETVGEVSPQVSEENQKHLGLETTCKDNFTVNLEAKGLQEFPKDILKIKYVKHLYLDKNQIKTFQGADSGDLLGLEILSLQENGLSSLPSEIQLLHNLRILNVSHNHISHIPKEISQLGNIRQLFFYNNYIENFPSDLECLGNLEILSLGKNKLRHIPDTLPSLKYLRVLNLEYNQLTIFPKALCFLPKLISLDLTGNLISSLPKEIRELKNLETLLLDHNKLTFLAVEIFQLLKIKELQLADNKLEVISHKIENFRELRILILDKNLLKNIPEKICCCAMLECLTLSDNKLTELPKNIHKLNNLRKLHVNRNNMVKITDSISHLNNICSLEFSGNIIAGIPIEIKNCQKIIKIELNYNKIMYFPLGLCALDSLYYLSVNGNYISEIPADISFSKQLLHLELSENKLLIFSEHFCSLINLKYLDLGKNQIKKIPASISNMISLHVLILCCNKFETFPRELCTLENLRVLDLSENQLQKISSDICNLKRIQKLNFSSNQFIHFPIELCQLQSLEQLNISQIKGRKLTRLPGELSNMTQLKELDISNNAIREIPRNIGELRNLVSLHAYNNQISYIPPSLLSLNDLQQLNLSGNNLTALPSAIYNLFSLKEINFDDNPLLRPPMEICKGKQLYTIARYLQRADERDEKILEKIFKIVANNITETNFEFLCQKLNLANSETDMPTKSTVSLSERAHQALVIWKTQSNKLSLTAAALRDQLIRALTMIGAYEIMDKITALNLFTRAIKF</sequence>
<organism>
    <name type="scientific">Macaca fascicularis</name>
    <name type="common">Crab-eating macaque</name>
    <name type="synonym">Cynomolgus monkey</name>
    <dbReference type="NCBI Taxonomy" id="9541"/>
    <lineage>
        <taxon>Eukaryota</taxon>
        <taxon>Metazoa</taxon>
        <taxon>Chordata</taxon>
        <taxon>Craniata</taxon>
        <taxon>Vertebrata</taxon>
        <taxon>Euteleostomi</taxon>
        <taxon>Mammalia</taxon>
        <taxon>Eutheria</taxon>
        <taxon>Euarchontoglires</taxon>
        <taxon>Primates</taxon>
        <taxon>Haplorrhini</taxon>
        <taxon>Catarrhini</taxon>
        <taxon>Cercopithecidae</taxon>
        <taxon>Cercopithecinae</taxon>
        <taxon>Macaca</taxon>
    </lineage>
</organism>
<evidence type="ECO:0000255" key="1">
    <source>
        <dbReference type="PROSITE-ProRule" id="PRU00064"/>
    </source>
</evidence>
<evidence type="ECO:0000256" key="2">
    <source>
        <dbReference type="SAM" id="MobiDB-lite"/>
    </source>
</evidence>
<proteinExistence type="evidence at transcript level"/>
<feature type="chain" id="PRO_0000325805" description="Leucine-rich repeat and death domain-containing protein 1">
    <location>
        <begin position="1"/>
        <end position="863"/>
    </location>
</feature>
<feature type="repeat" description="LRR 1">
    <location>
        <begin position="143"/>
        <end position="166"/>
    </location>
</feature>
<feature type="repeat" description="LRR 2">
    <location>
        <begin position="167"/>
        <end position="189"/>
    </location>
</feature>
<feature type="repeat" description="LRR 3">
    <location>
        <begin position="190"/>
        <end position="213"/>
    </location>
</feature>
<feature type="repeat" description="LRR 4">
    <location>
        <begin position="214"/>
        <end position="236"/>
    </location>
</feature>
<feature type="repeat" description="LRR 5">
    <location>
        <begin position="238"/>
        <end position="259"/>
    </location>
</feature>
<feature type="repeat" description="LRR 6">
    <location>
        <begin position="260"/>
        <end position="282"/>
    </location>
</feature>
<feature type="repeat" description="LRR 7">
    <location>
        <begin position="284"/>
        <end position="305"/>
    </location>
</feature>
<feature type="repeat" description="LRR 8">
    <location>
        <begin position="306"/>
        <end position="328"/>
    </location>
</feature>
<feature type="repeat" description="LRR 9">
    <location>
        <begin position="329"/>
        <end position="351"/>
    </location>
</feature>
<feature type="repeat" description="LRR 10">
    <location>
        <begin position="353"/>
        <end position="374"/>
    </location>
</feature>
<feature type="repeat" description="LRR 11">
    <location>
        <begin position="375"/>
        <end position="397"/>
    </location>
</feature>
<feature type="repeat" description="LRR 12">
    <location>
        <begin position="398"/>
        <end position="420"/>
    </location>
</feature>
<feature type="repeat" description="LRR 13">
    <location>
        <begin position="422"/>
        <end position="443"/>
    </location>
</feature>
<feature type="repeat" description="LRR 14">
    <location>
        <begin position="445"/>
        <end position="466"/>
    </location>
</feature>
<feature type="repeat" description="LRR 15">
    <location>
        <begin position="468"/>
        <end position="489"/>
    </location>
</feature>
<feature type="repeat" description="LRR 16">
    <location>
        <begin position="490"/>
        <end position="513"/>
    </location>
</feature>
<feature type="repeat" description="LRR 17">
    <location>
        <begin position="515"/>
        <end position="535"/>
    </location>
</feature>
<feature type="repeat" description="LRR 18">
    <location>
        <begin position="536"/>
        <end position="558"/>
    </location>
</feature>
<feature type="repeat" description="LRR 19">
    <location>
        <begin position="560"/>
        <end position="581"/>
    </location>
</feature>
<feature type="repeat" description="LRR 20">
    <location>
        <begin position="582"/>
        <end position="604"/>
    </location>
</feature>
<feature type="repeat" description="LRR 21">
    <location>
        <begin position="606"/>
        <end position="627"/>
    </location>
</feature>
<feature type="repeat" description="LRR 22">
    <location>
        <begin position="630"/>
        <end position="653"/>
    </location>
</feature>
<feature type="repeat" description="LRR 23">
    <location>
        <begin position="654"/>
        <end position="676"/>
    </location>
</feature>
<feature type="repeat" description="LRR 24">
    <location>
        <begin position="678"/>
        <end position="699"/>
    </location>
</feature>
<feature type="repeat" description="LRR 25">
    <location>
        <begin position="700"/>
        <end position="722"/>
    </location>
</feature>
<feature type="repeat" description="LRR 26">
    <location>
        <begin position="724"/>
        <end position="745"/>
    </location>
</feature>
<feature type="domain" description="Death" evidence="1">
    <location>
        <begin position="767"/>
        <end position="855"/>
    </location>
</feature>
<feature type="repeat" description="LRR 27">
    <location>
        <begin position="856"/>
        <end position="863"/>
    </location>
</feature>
<feature type="region of interest" description="Disordered" evidence="2">
    <location>
        <begin position="1"/>
        <end position="37"/>
    </location>
</feature>
<feature type="region of interest" description="Disordered" evidence="2">
    <location>
        <begin position="51"/>
        <end position="100"/>
    </location>
</feature>
<feature type="compositionally biased region" description="Low complexity" evidence="2">
    <location>
        <begin position="88"/>
        <end position="100"/>
    </location>
</feature>